<evidence type="ECO:0000255" key="1">
    <source>
        <dbReference type="HAMAP-Rule" id="MF_00460"/>
    </source>
</evidence>
<evidence type="ECO:0000256" key="2">
    <source>
        <dbReference type="SAM" id="MobiDB-lite"/>
    </source>
</evidence>
<feature type="chain" id="PRO_0000192504" description="UPF0125 protein VV1_0369">
    <location>
        <begin position="1"/>
        <end position="117"/>
    </location>
</feature>
<feature type="region of interest" description="Disordered" evidence="2">
    <location>
        <begin position="90"/>
        <end position="117"/>
    </location>
</feature>
<accession>Q8DF55</accession>
<protein>
    <recommendedName>
        <fullName evidence="1">UPF0125 protein VV1_0369</fullName>
    </recommendedName>
</protein>
<reference key="1">
    <citation type="submission" date="2002-12" db="EMBL/GenBank/DDBJ databases">
        <title>Complete genome sequence of Vibrio vulnificus CMCP6.</title>
        <authorList>
            <person name="Rhee J.H."/>
            <person name="Kim S.Y."/>
            <person name="Chung S.S."/>
            <person name="Kim J.J."/>
            <person name="Moon Y.H."/>
            <person name="Jeong H."/>
            <person name="Choy H.E."/>
        </authorList>
    </citation>
    <scope>NUCLEOTIDE SEQUENCE [LARGE SCALE GENOMIC DNA]</scope>
    <source>
        <strain>CMCP6</strain>
    </source>
</reference>
<organism>
    <name type="scientific">Vibrio vulnificus (strain CMCP6)</name>
    <dbReference type="NCBI Taxonomy" id="216895"/>
    <lineage>
        <taxon>Bacteria</taxon>
        <taxon>Pseudomonadati</taxon>
        <taxon>Pseudomonadota</taxon>
        <taxon>Gammaproteobacteria</taxon>
        <taxon>Vibrionales</taxon>
        <taxon>Vibrionaceae</taxon>
        <taxon>Vibrio</taxon>
    </lineage>
</organism>
<gene>
    <name type="ordered locus">VV1_0369</name>
</gene>
<dbReference type="EMBL" id="AE016795">
    <property type="protein sequence ID" value="AAO08893.1"/>
    <property type="molecule type" value="Genomic_DNA"/>
</dbReference>
<dbReference type="RefSeq" id="WP_011078464.1">
    <property type="nucleotide sequence ID" value="NC_004459.3"/>
</dbReference>
<dbReference type="SMR" id="Q8DF55"/>
<dbReference type="KEGG" id="vvu:VV1_0369"/>
<dbReference type="HOGENOM" id="CLU_150721_1_0_6"/>
<dbReference type="Proteomes" id="UP000002275">
    <property type="component" value="Chromosome 1"/>
</dbReference>
<dbReference type="Gene3D" id="3.10.20.280">
    <property type="entry name" value="RnfH-like"/>
    <property type="match status" value="1"/>
</dbReference>
<dbReference type="HAMAP" id="MF_00460">
    <property type="entry name" value="UPF0125_RnfH"/>
    <property type="match status" value="1"/>
</dbReference>
<dbReference type="InterPro" id="IPR016155">
    <property type="entry name" value="Mopterin_synth/thiamin_S_b"/>
</dbReference>
<dbReference type="InterPro" id="IPR005346">
    <property type="entry name" value="RnfH"/>
</dbReference>
<dbReference type="InterPro" id="IPR037021">
    <property type="entry name" value="RnfH_sf"/>
</dbReference>
<dbReference type="NCBIfam" id="NF002490">
    <property type="entry name" value="PRK01777.1"/>
    <property type="match status" value="1"/>
</dbReference>
<dbReference type="PANTHER" id="PTHR37483">
    <property type="entry name" value="UPF0125 PROTEIN RATB"/>
    <property type="match status" value="1"/>
</dbReference>
<dbReference type="PANTHER" id="PTHR37483:SF1">
    <property type="entry name" value="UPF0125 PROTEIN RATB"/>
    <property type="match status" value="1"/>
</dbReference>
<dbReference type="Pfam" id="PF03658">
    <property type="entry name" value="Ub-RnfH"/>
    <property type="match status" value="1"/>
</dbReference>
<dbReference type="SUPFAM" id="SSF54285">
    <property type="entry name" value="MoaD/ThiS"/>
    <property type="match status" value="1"/>
</dbReference>
<comment type="similarity">
    <text evidence="1">Belongs to the UPF0125 (RnfH) family.</text>
</comment>
<proteinExistence type="inferred from homology"/>
<sequence length="117" mass="13149">MSIESEMIHVEVVYALPQEQRVLTLVVNQQATVEEIIRQSGVLEIYPEIDLGKNKVGVFSRLVKLDATVRDKDRIEIYRPLLADPKEIRRKRAEQAKESGAADPVTGGKPSPLRKAD</sequence>
<name>Y369_VIBVU</name>